<sequence length="215" mass="24034">MVLLQIIASQSYSIEVDEHSSLGNIFDLLSDQGILPKNAKSLHAFYYHGTRLNMNMTCADYGIIHDSAVHIAPLPSSCDIDFKDYSTSAFHLHFSPLTPNHASTEAVSNFKQSSTIPSISKSNLTNPPLESEKSSDKALLTRPATSRRRCCHPTCTRITLRLAGNCLHCNGRFCAAHRLMEDHDCVALFSLRKEEHERNRIKLEKEHGDTLISKV</sequence>
<gene>
    <name type="ORF">SPBC1271.05c</name>
</gene>
<feature type="chain" id="PRO_0000310726" description="AN1-type zinc finger protein C1271.05c">
    <location>
        <begin position="1"/>
        <end position="215"/>
    </location>
</feature>
<feature type="zinc finger region" description="AN1-type" evidence="1">
    <location>
        <begin position="144"/>
        <end position="193"/>
    </location>
</feature>
<feature type="region of interest" description="Disordered" evidence="2">
    <location>
        <begin position="116"/>
        <end position="138"/>
    </location>
</feature>
<feature type="compositionally biased region" description="Polar residues" evidence="2">
    <location>
        <begin position="116"/>
        <end position="128"/>
    </location>
</feature>
<feature type="binding site" evidence="1">
    <location>
        <position position="150"/>
    </location>
    <ligand>
        <name>Zn(2+)</name>
        <dbReference type="ChEBI" id="CHEBI:29105"/>
        <label>1</label>
    </ligand>
</feature>
<feature type="binding site" evidence="1">
    <location>
        <position position="155"/>
    </location>
    <ligand>
        <name>Zn(2+)</name>
        <dbReference type="ChEBI" id="CHEBI:29105"/>
        <label>1</label>
    </ligand>
</feature>
<feature type="binding site" evidence="1">
    <location>
        <position position="166"/>
    </location>
    <ligand>
        <name>Zn(2+)</name>
        <dbReference type="ChEBI" id="CHEBI:29105"/>
        <label>2</label>
    </ligand>
</feature>
<feature type="binding site" evidence="1">
    <location>
        <position position="169"/>
    </location>
    <ligand>
        <name>Zn(2+)</name>
        <dbReference type="ChEBI" id="CHEBI:29105"/>
        <label>2</label>
    </ligand>
</feature>
<feature type="binding site" evidence="1">
    <location>
        <position position="174"/>
    </location>
    <ligand>
        <name>Zn(2+)</name>
        <dbReference type="ChEBI" id="CHEBI:29105"/>
        <label>1</label>
    </ligand>
</feature>
<feature type="binding site" evidence="1">
    <location>
        <position position="177"/>
    </location>
    <ligand>
        <name>Zn(2+)</name>
        <dbReference type="ChEBI" id="CHEBI:29105"/>
        <label>1</label>
    </ligand>
</feature>
<feature type="binding site" evidence="1">
    <location>
        <position position="183"/>
    </location>
    <ligand>
        <name>Zn(2+)</name>
        <dbReference type="ChEBI" id="CHEBI:29105"/>
        <label>2</label>
    </ligand>
</feature>
<feature type="binding site" evidence="1">
    <location>
        <position position="185"/>
    </location>
    <ligand>
        <name>Zn(2+)</name>
        <dbReference type="ChEBI" id="CHEBI:29105"/>
        <label>2</label>
    </ligand>
</feature>
<protein>
    <recommendedName>
        <fullName>AN1-type zinc finger protein C1271.05c</fullName>
    </recommendedName>
</protein>
<keyword id="KW-0963">Cytoplasm</keyword>
<keyword id="KW-0479">Metal-binding</keyword>
<keyword id="KW-0539">Nucleus</keyword>
<keyword id="KW-1185">Reference proteome</keyword>
<keyword id="KW-0862">Zinc</keyword>
<keyword id="KW-0863">Zinc-finger</keyword>
<reference key="1">
    <citation type="journal article" date="2002" name="Nature">
        <title>The genome sequence of Schizosaccharomyces pombe.</title>
        <authorList>
            <person name="Wood V."/>
            <person name="Gwilliam R."/>
            <person name="Rajandream M.A."/>
            <person name="Lyne M.H."/>
            <person name="Lyne R."/>
            <person name="Stewart A."/>
            <person name="Sgouros J.G."/>
            <person name="Peat N."/>
            <person name="Hayles J."/>
            <person name="Baker S.G."/>
            <person name="Basham D."/>
            <person name="Bowman S."/>
            <person name="Brooks K."/>
            <person name="Brown D."/>
            <person name="Brown S."/>
            <person name="Chillingworth T."/>
            <person name="Churcher C.M."/>
            <person name="Collins M."/>
            <person name="Connor R."/>
            <person name="Cronin A."/>
            <person name="Davis P."/>
            <person name="Feltwell T."/>
            <person name="Fraser A."/>
            <person name="Gentles S."/>
            <person name="Goble A."/>
            <person name="Hamlin N."/>
            <person name="Harris D.E."/>
            <person name="Hidalgo J."/>
            <person name="Hodgson G."/>
            <person name="Holroyd S."/>
            <person name="Hornsby T."/>
            <person name="Howarth S."/>
            <person name="Huckle E.J."/>
            <person name="Hunt S."/>
            <person name="Jagels K."/>
            <person name="James K.D."/>
            <person name="Jones L."/>
            <person name="Jones M."/>
            <person name="Leather S."/>
            <person name="McDonald S."/>
            <person name="McLean J."/>
            <person name="Mooney P."/>
            <person name="Moule S."/>
            <person name="Mungall K.L."/>
            <person name="Murphy L.D."/>
            <person name="Niblett D."/>
            <person name="Odell C."/>
            <person name="Oliver K."/>
            <person name="O'Neil S."/>
            <person name="Pearson D."/>
            <person name="Quail M.A."/>
            <person name="Rabbinowitsch E."/>
            <person name="Rutherford K.M."/>
            <person name="Rutter S."/>
            <person name="Saunders D."/>
            <person name="Seeger K."/>
            <person name="Sharp S."/>
            <person name="Skelton J."/>
            <person name="Simmonds M.N."/>
            <person name="Squares R."/>
            <person name="Squares S."/>
            <person name="Stevens K."/>
            <person name="Taylor K."/>
            <person name="Taylor R.G."/>
            <person name="Tivey A."/>
            <person name="Walsh S.V."/>
            <person name="Warren T."/>
            <person name="Whitehead S."/>
            <person name="Woodward J.R."/>
            <person name="Volckaert G."/>
            <person name="Aert R."/>
            <person name="Robben J."/>
            <person name="Grymonprez B."/>
            <person name="Weltjens I."/>
            <person name="Vanstreels E."/>
            <person name="Rieger M."/>
            <person name="Schaefer M."/>
            <person name="Mueller-Auer S."/>
            <person name="Gabel C."/>
            <person name="Fuchs M."/>
            <person name="Duesterhoeft A."/>
            <person name="Fritzc C."/>
            <person name="Holzer E."/>
            <person name="Moestl D."/>
            <person name="Hilbert H."/>
            <person name="Borzym K."/>
            <person name="Langer I."/>
            <person name="Beck A."/>
            <person name="Lehrach H."/>
            <person name="Reinhardt R."/>
            <person name="Pohl T.M."/>
            <person name="Eger P."/>
            <person name="Zimmermann W."/>
            <person name="Wedler H."/>
            <person name="Wambutt R."/>
            <person name="Purnelle B."/>
            <person name="Goffeau A."/>
            <person name="Cadieu E."/>
            <person name="Dreano S."/>
            <person name="Gloux S."/>
            <person name="Lelaure V."/>
            <person name="Mottier S."/>
            <person name="Galibert F."/>
            <person name="Aves S.J."/>
            <person name="Xiang Z."/>
            <person name="Hunt C."/>
            <person name="Moore K."/>
            <person name="Hurst S.M."/>
            <person name="Lucas M."/>
            <person name="Rochet M."/>
            <person name="Gaillardin C."/>
            <person name="Tallada V.A."/>
            <person name="Garzon A."/>
            <person name="Thode G."/>
            <person name="Daga R.R."/>
            <person name="Cruzado L."/>
            <person name="Jimenez J."/>
            <person name="Sanchez M."/>
            <person name="del Rey F."/>
            <person name="Benito J."/>
            <person name="Dominguez A."/>
            <person name="Revuelta J.L."/>
            <person name="Moreno S."/>
            <person name="Armstrong J."/>
            <person name="Forsburg S.L."/>
            <person name="Cerutti L."/>
            <person name="Lowe T."/>
            <person name="McCombie W.R."/>
            <person name="Paulsen I."/>
            <person name="Potashkin J."/>
            <person name="Shpakovski G.V."/>
            <person name="Ussery D."/>
            <person name="Barrell B.G."/>
            <person name="Nurse P."/>
        </authorList>
    </citation>
    <scope>NUCLEOTIDE SEQUENCE [LARGE SCALE GENOMIC DNA]</scope>
    <source>
        <strain>972 / ATCC 24843</strain>
    </source>
</reference>
<reference key="2">
    <citation type="journal article" date="2006" name="Nat. Biotechnol.">
        <title>ORFeome cloning and global analysis of protein localization in the fission yeast Schizosaccharomyces pombe.</title>
        <authorList>
            <person name="Matsuyama A."/>
            <person name="Arai R."/>
            <person name="Yashiroda Y."/>
            <person name="Shirai A."/>
            <person name="Kamata A."/>
            <person name="Sekido S."/>
            <person name="Kobayashi Y."/>
            <person name="Hashimoto A."/>
            <person name="Hamamoto M."/>
            <person name="Hiraoka Y."/>
            <person name="Horinouchi S."/>
            <person name="Yoshida M."/>
        </authorList>
    </citation>
    <scope>SUBCELLULAR LOCATION [LARGE SCALE ANALYSIS]</scope>
</reference>
<proteinExistence type="predicted"/>
<name>YHM5_SCHPO</name>
<comment type="subcellular location">
    <subcellularLocation>
        <location evidence="3">Cytoplasm</location>
    </subcellularLocation>
    <subcellularLocation>
        <location evidence="3">Nucleus</location>
    </subcellularLocation>
</comment>
<evidence type="ECO:0000255" key="1">
    <source>
        <dbReference type="PROSITE-ProRule" id="PRU00449"/>
    </source>
</evidence>
<evidence type="ECO:0000256" key="2">
    <source>
        <dbReference type="SAM" id="MobiDB-lite"/>
    </source>
</evidence>
<evidence type="ECO:0000269" key="3">
    <source>
    </source>
</evidence>
<organism>
    <name type="scientific">Schizosaccharomyces pombe (strain 972 / ATCC 24843)</name>
    <name type="common">Fission yeast</name>
    <dbReference type="NCBI Taxonomy" id="284812"/>
    <lineage>
        <taxon>Eukaryota</taxon>
        <taxon>Fungi</taxon>
        <taxon>Dikarya</taxon>
        <taxon>Ascomycota</taxon>
        <taxon>Taphrinomycotina</taxon>
        <taxon>Schizosaccharomycetes</taxon>
        <taxon>Schizosaccharomycetales</taxon>
        <taxon>Schizosaccharomycetaceae</taxon>
        <taxon>Schizosaccharomyces</taxon>
    </lineage>
</organism>
<accession>O94338</accession>
<dbReference type="EMBL" id="CU329671">
    <property type="protein sequence ID" value="CAA22195.1"/>
    <property type="molecule type" value="Genomic_DNA"/>
</dbReference>
<dbReference type="PIR" id="T39341">
    <property type="entry name" value="T39341"/>
</dbReference>
<dbReference type="RefSeq" id="NP_595145.1">
    <property type="nucleotide sequence ID" value="NM_001021053.2"/>
</dbReference>
<dbReference type="SMR" id="O94338"/>
<dbReference type="BioGRID" id="276532">
    <property type="interactions" value="21"/>
</dbReference>
<dbReference type="FunCoup" id="O94338">
    <property type="interactions" value="419"/>
</dbReference>
<dbReference type="STRING" id="284812.O94338"/>
<dbReference type="iPTMnet" id="O94338"/>
<dbReference type="PaxDb" id="4896-SPBC1271.05c.1"/>
<dbReference type="EnsemblFungi" id="SPBC1271.05c.1">
    <property type="protein sequence ID" value="SPBC1271.05c.1:pep"/>
    <property type="gene ID" value="SPBC1271.05c"/>
</dbReference>
<dbReference type="KEGG" id="spo:2539988"/>
<dbReference type="PomBase" id="SPBC1271.05c"/>
<dbReference type="VEuPathDB" id="FungiDB:SPBC1271.05c"/>
<dbReference type="eggNOG" id="ENOG502SA79">
    <property type="taxonomic scope" value="Eukaryota"/>
</dbReference>
<dbReference type="HOGENOM" id="CLU_1283926_0_0_1"/>
<dbReference type="InParanoid" id="O94338"/>
<dbReference type="OMA" id="LMEDHDC"/>
<dbReference type="PhylomeDB" id="O94338"/>
<dbReference type="PRO" id="PR:O94338"/>
<dbReference type="Proteomes" id="UP000002485">
    <property type="component" value="Chromosome II"/>
</dbReference>
<dbReference type="GO" id="GO:0005737">
    <property type="term" value="C:cytoplasm"/>
    <property type="evidence" value="ECO:0000318"/>
    <property type="project" value="GO_Central"/>
</dbReference>
<dbReference type="GO" id="GO:0005829">
    <property type="term" value="C:cytosol"/>
    <property type="evidence" value="ECO:0007005"/>
    <property type="project" value="PomBase"/>
</dbReference>
<dbReference type="GO" id="GO:0005634">
    <property type="term" value="C:nucleus"/>
    <property type="evidence" value="ECO:0007005"/>
    <property type="project" value="PomBase"/>
</dbReference>
<dbReference type="GO" id="GO:0008270">
    <property type="term" value="F:zinc ion binding"/>
    <property type="evidence" value="ECO:0007669"/>
    <property type="project" value="UniProtKB-KW"/>
</dbReference>
<dbReference type="GO" id="GO:0006616">
    <property type="term" value="P:SRP-dependent cotranslational protein targeting to membrane, translocation"/>
    <property type="evidence" value="ECO:0000266"/>
    <property type="project" value="PomBase"/>
</dbReference>
<dbReference type="Gene3D" id="4.10.1110.10">
    <property type="entry name" value="AN1-like Zinc finger"/>
    <property type="match status" value="1"/>
</dbReference>
<dbReference type="InterPro" id="IPR035896">
    <property type="entry name" value="AN1-like_Znf"/>
</dbReference>
<dbReference type="InterPro" id="IPR029071">
    <property type="entry name" value="Ubiquitin-like_domsf"/>
</dbReference>
<dbReference type="InterPro" id="IPR000058">
    <property type="entry name" value="Znf_AN1"/>
</dbReference>
<dbReference type="PANTHER" id="PTHR14677">
    <property type="entry name" value="ARSENITE INDUCUBLE RNA ASSOCIATED PROTEIN AIP-1-RELATED"/>
    <property type="match status" value="1"/>
</dbReference>
<dbReference type="PANTHER" id="PTHR14677:SF20">
    <property type="entry name" value="ZINC FINGER AN1-TYPE CONTAINING 2A-RELATED"/>
    <property type="match status" value="1"/>
</dbReference>
<dbReference type="Pfam" id="PF01428">
    <property type="entry name" value="zf-AN1"/>
    <property type="match status" value="1"/>
</dbReference>
<dbReference type="SMART" id="SM00154">
    <property type="entry name" value="ZnF_AN1"/>
    <property type="match status" value="1"/>
</dbReference>
<dbReference type="SUPFAM" id="SSF118310">
    <property type="entry name" value="AN1-like Zinc finger"/>
    <property type="match status" value="1"/>
</dbReference>
<dbReference type="SUPFAM" id="SSF54236">
    <property type="entry name" value="Ubiquitin-like"/>
    <property type="match status" value="1"/>
</dbReference>
<dbReference type="PROSITE" id="PS51039">
    <property type="entry name" value="ZF_AN1"/>
    <property type="match status" value="1"/>
</dbReference>